<gene>
    <name type="primary">ublcp1</name>
    <name type="ORF">zgc:86634</name>
</gene>
<feature type="chain" id="PRO_0000242645" description="Ubiquitin-like domain-containing CTD phosphatase 1">
    <location>
        <begin position="1"/>
        <end position="318"/>
    </location>
</feature>
<feature type="domain" description="Ubiquitin-like" evidence="4">
    <location>
        <begin position="3"/>
        <end position="81"/>
    </location>
</feature>
<feature type="domain" description="FCP1 homology" evidence="5">
    <location>
        <begin position="133"/>
        <end position="294"/>
    </location>
</feature>
<feature type="binding site" evidence="3">
    <location>
        <position position="143"/>
    </location>
    <ligand>
        <name>Mg(2+)</name>
        <dbReference type="ChEBI" id="CHEBI:18420"/>
    </ligand>
</feature>
<feature type="binding site" evidence="3">
    <location>
        <position position="145"/>
    </location>
    <ligand>
        <name>Mg(2+)</name>
        <dbReference type="ChEBI" id="CHEBI:18420"/>
    </ligand>
</feature>
<feature type="binding site" evidence="3">
    <location>
        <position position="253"/>
    </location>
    <ligand>
        <name>Mg(2+)</name>
        <dbReference type="ChEBI" id="CHEBI:18420"/>
    </ligand>
</feature>
<proteinExistence type="evidence at transcript level"/>
<evidence type="ECO:0000250" key="1"/>
<evidence type="ECO:0000250" key="2">
    <source>
        <dbReference type="UniProtKB" id="Q8WVY7"/>
    </source>
</evidence>
<evidence type="ECO:0000250" key="3">
    <source>
        <dbReference type="UniProtKB" id="Q9XZ16"/>
    </source>
</evidence>
<evidence type="ECO:0000255" key="4">
    <source>
        <dbReference type="PROSITE-ProRule" id="PRU00214"/>
    </source>
</evidence>
<evidence type="ECO:0000255" key="5">
    <source>
        <dbReference type="PROSITE-ProRule" id="PRU00336"/>
    </source>
</evidence>
<accession>Q6DI37</accession>
<protein>
    <recommendedName>
        <fullName>Ubiquitin-like domain-containing CTD phosphatase 1</fullName>
        <ecNumber evidence="2">3.1.3.16</ecNumber>
    </recommendedName>
    <alternativeName>
        <fullName>Nuclear proteasome inhibitor UBLCP1</fullName>
    </alternativeName>
</protein>
<sequence length="318" mass="36822">MSVSVIIKWGGQEYSINTLSEEDTVLDLKQSIKSLTGVLPERQKLLGLKLKGKPADDNVKLGDLKLKPNTKIMMMGTREESLEDVLAPPPENDDVVNDFDIEEEVTEVENREENLAKIARRVKDYKVEELNPPRPGKRLLVLDIDYTLFDHKSCAETGHELMRPFLHEFLTSAYEDFDIVIWSATSMKWIDAKMKELGVTDNPNYKITFMLDSAAMITVHTPKRGVVEVKPLGVIWGKYSEFYNRKNTIMFDDIGRNFLMNPQNGLKIRPFMKAHLNREKDKELYKLSQYLKEIAKLDDFSGLNHKHWERYLSKKQNQ</sequence>
<keyword id="KW-0378">Hydrolase</keyword>
<keyword id="KW-0460">Magnesium</keyword>
<keyword id="KW-0479">Metal-binding</keyword>
<keyword id="KW-0539">Nucleus</keyword>
<keyword id="KW-0904">Protein phosphatase</keyword>
<keyword id="KW-1185">Reference proteome</keyword>
<comment type="function">
    <text evidence="2">Dephosphorylates 26S nuclear proteasomes, thereby decreasing their proteolytic activity. Recruited to the 19S regulatory particle of the 26S proteasome where it dephosphorylates 19S component psmc2 which impairs psmc2 ATPase activity and disrupts 26S proteasome assembly. Has also been reported to stimulate the proteolytic activity of the 26S proteasome.</text>
</comment>
<comment type="catalytic activity">
    <reaction evidence="2">
        <text>O-phospho-L-seryl-[protein] + H2O = L-seryl-[protein] + phosphate</text>
        <dbReference type="Rhea" id="RHEA:20629"/>
        <dbReference type="Rhea" id="RHEA-COMP:9863"/>
        <dbReference type="Rhea" id="RHEA-COMP:11604"/>
        <dbReference type="ChEBI" id="CHEBI:15377"/>
        <dbReference type="ChEBI" id="CHEBI:29999"/>
        <dbReference type="ChEBI" id="CHEBI:43474"/>
        <dbReference type="ChEBI" id="CHEBI:83421"/>
        <dbReference type="EC" id="3.1.3.16"/>
    </reaction>
</comment>
<comment type="catalytic activity">
    <reaction evidence="2">
        <text>O-phospho-L-threonyl-[protein] + H2O = L-threonyl-[protein] + phosphate</text>
        <dbReference type="Rhea" id="RHEA:47004"/>
        <dbReference type="Rhea" id="RHEA-COMP:11060"/>
        <dbReference type="Rhea" id="RHEA-COMP:11605"/>
        <dbReference type="ChEBI" id="CHEBI:15377"/>
        <dbReference type="ChEBI" id="CHEBI:30013"/>
        <dbReference type="ChEBI" id="CHEBI:43474"/>
        <dbReference type="ChEBI" id="CHEBI:61977"/>
        <dbReference type="EC" id="3.1.3.16"/>
    </reaction>
</comment>
<comment type="cofactor">
    <cofactor evidence="1">
        <name>Mg(2+)</name>
        <dbReference type="ChEBI" id="CHEBI:18420"/>
    </cofactor>
</comment>
<comment type="subcellular location">
    <subcellularLocation>
        <location evidence="2">Nucleus</location>
    </subcellularLocation>
    <text evidence="2">Colocalizes with nuclear proteasomes.</text>
</comment>
<comment type="domain">
    <text evidence="2">The Ubiquitin-like domain mediates interaction with proteasomes.</text>
</comment>
<dbReference type="EC" id="3.1.3.16" evidence="2"/>
<dbReference type="EMBL" id="BC075753">
    <property type="protein sequence ID" value="AAH75753.1"/>
    <property type="molecule type" value="mRNA"/>
</dbReference>
<dbReference type="RefSeq" id="NP_001002319.1">
    <property type="nucleotide sequence ID" value="NM_001002319.2"/>
</dbReference>
<dbReference type="RefSeq" id="NP_001186304.1">
    <property type="nucleotide sequence ID" value="NM_001199375.1"/>
</dbReference>
<dbReference type="SMR" id="Q6DI37"/>
<dbReference type="FunCoup" id="Q6DI37">
    <property type="interactions" value="1389"/>
</dbReference>
<dbReference type="STRING" id="7955.ENSDARP00000065340"/>
<dbReference type="PaxDb" id="7955-ENSDARP00000065340"/>
<dbReference type="Ensembl" id="ENSDART00000065341">
    <property type="protein sequence ID" value="ENSDARP00000065340"/>
    <property type="gene ID" value="ENSDARG00000044492"/>
</dbReference>
<dbReference type="Ensembl" id="ENSDART00000076715">
    <property type="protein sequence ID" value="ENSDARP00000071186"/>
    <property type="gene ID" value="ENSDARG00000044492"/>
</dbReference>
<dbReference type="Ensembl" id="ENSDART00000162189">
    <property type="protein sequence ID" value="ENSDARP00000130882"/>
    <property type="gene ID" value="ENSDARG00000044492"/>
</dbReference>
<dbReference type="Ensembl" id="ENSDART00000185042">
    <property type="protein sequence ID" value="ENSDARP00000144720"/>
    <property type="gene ID" value="ENSDARG00000044492"/>
</dbReference>
<dbReference type="GeneID" id="792145"/>
<dbReference type="KEGG" id="dre:792145"/>
<dbReference type="AGR" id="ZFIN:ZDB-GENE-040718-3"/>
<dbReference type="CTD" id="134510"/>
<dbReference type="ZFIN" id="ZDB-GENE-040718-3">
    <property type="gene designation" value="ublcp1"/>
</dbReference>
<dbReference type="eggNOG" id="KOG1605">
    <property type="taxonomic scope" value="Eukaryota"/>
</dbReference>
<dbReference type="eggNOG" id="KOG1872">
    <property type="taxonomic scope" value="Eukaryota"/>
</dbReference>
<dbReference type="InParanoid" id="Q6DI37"/>
<dbReference type="OMA" id="TVHTPKY"/>
<dbReference type="OrthoDB" id="1711508at2759"/>
<dbReference type="PhylomeDB" id="Q6DI37"/>
<dbReference type="TreeFam" id="TF323786"/>
<dbReference type="PRO" id="PR:Q6DI37"/>
<dbReference type="Proteomes" id="UP000000437">
    <property type="component" value="Alternate scaffold 21"/>
</dbReference>
<dbReference type="Proteomes" id="UP000000437">
    <property type="component" value="Chromosome 21"/>
</dbReference>
<dbReference type="Bgee" id="ENSDARG00000044492">
    <property type="expression patterns" value="Expressed in blastula and 20 other cell types or tissues"/>
</dbReference>
<dbReference type="ExpressionAtlas" id="Q6DI37">
    <property type="expression patterns" value="baseline"/>
</dbReference>
<dbReference type="GO" id="GO:0005634">
    <property type="term" value="C:nucleus"/>
    <property type="evidence" value="ECO:0000318"/>
    <property type="project" value="GO_Central"/>
</dbReference>
<dbReference type="GO" id="GO:0046872">
    <property type="term" value="F:metal ion binding"/>
    <property type="evidence" value="ECO:0007669"/>
    <property type="project" value="UniProtKB-KW"/>
</dbReference>
<dbReference type="GO" id="GO:0004722">
    <property type="term" value="F:protein serine/threonine phosphatase activity"/>
    <property type="evidence" value="ECO:0000318"/>
    <property type="project" value="GO_Central"/>
</dbReference>
<dbReference type="GO" id="GO:0090364">
    <property type="term" value="P:regulation of proteasome assembly"/>
    <property type="evidence" value="ECO:0000318"/>
    <property type="project" value="GO_Central"/>
</dbReference>
<dbReference type="CDD" id="cd01813">
    <property type="entry name" value="Ubl_UBLCP1"/>
    <property type="match status" value="1"/>
</dbReference>
<dbReference type="FunFam" id="3.40.50.1000:FF:000050">
    <property type="entry name" value="Ubiquitin-like domain-containing CTD phosphatase 1"/>
    <property type="match status" value="1"/>
</dbReference>
<dbReference type="FunFam" id="3.10.20.90:FF:000060">
    <property type="entry name" value="ubiquitin-like domain-containing CTD phosphatase 1"/>
    <property type="match status" value="1"/>
</dbReference>
<dbReference type="Gene3D" id="3.40.50.1000">
    <property type="entry name" value="HAD superfamily/HAD-like"/>
    <property type="match status" value="1"/>
</dbReference>
<dbReference type="Gene3D" id="3.10.20.90">
    <property type="entry name" value="Phosphatidylinositol 3-kinase Catalytic Subunit, Chain A, domain 1"/>
    <property type="match status" value="1"/>
</dbReference>
<dbReference type="InterPro" id="IPR004274">
    <property type="entry name" value="FCP1_dom"/>
</dbReference>
<dbReference type="InterPro" id="IPR036412">
    <property type="entry name" value="HAD-like_sf"/>
</dbReference>
<dbReference type="InterPro" id="IPR011943">
    <property type="entry name" value="HAD-SF_hydro_IIID"/>
</dbReference>
<dbReference type="InterPro" id="IPR023214">
    <property type="entry name" value="HAD_sf"/>
</dbReference>
<dbReference type="InterPro" id="IPR000626">
    <property type="entry name" value="Ubiquitin-like_dom"/>
</dbReference>
<dbReference type="InterPro" id="IPR029071">
    <property type="entry name" value="Ubiquitin-like_domsf"/>
</dbReference>
<dbReference type="InterPro" id="IPR051658">
    <property type="entry name" value="UBLCP1"/>
</dbReference>
<dbReference type="NCBIfam" id="TIGR02245">
    <property type="entry name" value="HAD_IIID1"/>
    <property type="match status" value="1"/>
</dbReference>
<dbReference type="PANTHER" id="PTHR48493">
    <property type="entry name" value="UBIQUITIN-LIKE DOMAIN-CONTAINING CTD PHOSPHATASE 1"/>
    <property type="match status" value="1"/>
</dbReference>
<dbReference type="PANTHER" id="PTHR48493:SF1">
    <property type="entry name" value="UBIQUITIN-LIKE DOMAIN-CONTAINING CTD PHOSPHATASE 1"/>
    <property type="match status" value="1"/>
</dbReference>
<dbReference type="Pfam" id="PF03031">
    <property type="entry name" value="NIF"/>
    <property type="match status" value="1"/>
</dbReference>
<dbReference type="Pfam" id="PF00240">
    <property type="entry name" value="ubiquitin"/>
    <property type="match status" value="1"/>
</dbReference>
<dbReference type="SMART" id="SM00577">
    <property type="entry name" value="CPDc"/>
    <property type="match status" value="1"/>
</dbReference>
<dbReference type="SMART" id="SM00213">
    <property type="entry name" value="UBQ"/>
    <property type="match status" value="1"/>
</dbReference>
<dbReference type="SUPFAM" id="SSF56784">
    <property type="entry name" value="HAD-like"/>
    <property type="match status" value="1"/>
</dbReference>
<dbReference type="SUPFAM" id="SSF54236">
    <property type="entry name" value="Ubiquitin-like"/>
    <property type="match status" value="1"/>
</dbReference>
<dbReference type="PROSITE" id="PS50969">
    <property type="entry name" value="FCP1"/>
    <property type="match status" value="1"/>
</dbReference>
<dbReference type="PROSITE" id="PS50053">
    <property type="entry name" value="UBIQUITIN_2"/>
    <property type="match status" value="1"/>
</dbReference>
<name>UBCP1_DANRE</name>
<organism>
    <name type="scientific">Danio rerio</name>
    <name type="common">Zebrafish</name>
    <name type="synonym">Brachydanio rerio</name>
    <dbReference type="NCBI Taxonomy" id="7955"/>
    <lineage>
        <taxon>Eukaryota</taxon>
        <taxon>Metazoa</taxon>
        <taxon>Chordata</taxon>
        <taxon>Craniata</taxon>
        <taxon>Vertebrata</taxon>
        <taxon>Euteleostomi</taxon>
        <taxon>Actinopterygii</taxon>
        <taxon>Neopterygii</taxon>
        <taxon>Teleostei</taxon>
        <taxon>Ostariophysi</taxon>
        <taxon>Cypriniformes</taxon>
        <taxon>Danionidae</taxon>
        <taxon>Danioninae</taxon>
        <taxon>Danio</taxon>
    </lineage>
</organism>
<reference key="1">
    <citation type="submission" date="2004-07" db="EMBL/GenBank/DDBJ databases">
        <authorList>
            <consortium name="NIH - Zebrafish Gene Collection (ZGC) project"/>
        </authorList>
    </citation>
    <scope>NUCLEOTIDE SEQUENCE [LARGE SCALE MRNA]</scope>
    <source>
        <tissue>Embryo</tissue>
    </source>
</reference>